<reference key="1">
    <citation type="journal article" date="1995" name="DNA Res.">
        <title>Sequence analysis of the genome of the unicellular cyanobacterium Synechocystis sp. strain PCC6803. I. Sequence features in the 1 Mb region from map positions 64% to 92% of the genome.</title>
        <authorList>
            <person name="Kaneko T."/>
            <person name="Tanaka A."/>
            <person name="Sato S."/>
            <person name="Kotani H."/>
            <person name="Sazuka T."/>
            <person name="Miyajima N."/>
            <person name="Sugiura M."/>
            <person name="Tabata S."/>
        </authorList>
    </citation>
    <scope>NUCLEOTIDE SEQUENCE [LARGE SCALE GENOMIC DNA]</scope>
    <source>
        <strain>ATCC 27184 / PCC 6803 / N-1</strain>
    </source>
</reference>
<reference key="2">
    <citation type="journal article" date="1996" name="DNA Res.">
        <title>Sequence analysis of the genome of the unicellular cyanobacterium Synechocystis sp. strain PCC6803. II. Sequence determination of the entire genome and assignment of potential protein-coding regions.</title>
        <authorList>
            <person name="Kaneko T."/>
            <person name="Sato S."/>
            <person name="Kotani H."/>
            <person name="Tanaka A."/>
            <person name="Asamizu E."/>
            <person name="Nakamura Y."/>
            <person name="Miyajima N."/>
            <person name="Hirosawa M."/>
            <person name="Sugiura M."/>
            <person name="Sasamoto S."/>
            <person name="Kimura T."/>
            <person name="Hosouchi T."/>
            <person name="Matsuno A."/>
            <person name="Muraki A."/>
            <person name="Nakazaki N."/>
            <person name="Naruo K."/>
            <person name="Okumura S."/>
            <person name="Shimpo S."/>
            <person name="Takeuchi C."/>
            <person name="Wada T."/>
            <person name="Watanabe A."/>
            <person name="Yamada M."/>
            <person name="Yasuda M."/>
            <person name="Tabata S."/>
        </authorList>
    </citation>
    <scope>NUCLEOTIDE SEQUENCE [LARGE SCALE GENOMIC DNA]</scope>
    <source>
        <strain>ATCC 27184 / PCC 6803 / Kazusa</strain>
    </source>
</reference>
<keyword id="KW-0002">3D-structure</keyword>
<keyword id="KW-0249">Electron transport</keyword>
<keyword id="KW-0472">Membrane</keyword>
<keyword id="KW-0602">Photosynthesis</keyword>
<keyword id="KW-1185">Reference proteome</keyword>
<keyword id="KW-0793">Thylakoid</keyword>
<keyword id="KW-0812">Transmembrane</keyword>
<keyword id="KW-1133">Transmembrane helix</keyword>
<keyword id="KW-0813">Transport</keyword>
<comment type="function">
    <text evidence="1">Component of the cytochrome b6-f complex, which mediates electron transfer between photosystem II (PSII) and photosystem I (PSI), cyclic electron flow around PSI, and state transitions.</text>
</comment>
<comment type="subunit">
    <text evidence="1">The 4 large subunits of the cytochrome b6-f complex are cytochrome b6, subunit IV (17 kDa polypeptide, PetD), cytochrome f and the Rieske protein, while the 4 small subunits are PetG, PetL, PetM and PetN. The complex functions as a dimer.</text>
</comment>
<comment type="subcellular location">
    <subcellularLocation>
        <location evidence="1">Cellular thylakoid membrane</location>
        <topology evidence="1">Single-pass membrane protein</topology>
    </subcellularLocation>
</comment>
<comment type="similarity">
    <text evidence="1">Belongs to the PetM family.</text>
</comment>
<feature type="chain" id="PRO_0000218018" description="Cytochrome b6-f complex subunit 7">
    <location>
        <begin position="1"/>
        <end position="36"/>
    </location>
</feature>
<feature type="transmembrane region" description="Helical" evidence="1">
    <location>
        <begin position="9"/>
        <end position="29"/>
    </location>
</feature>
<feature type="helix" evidence="2">
    <location>
        <begin position="4"/>
        <end position="7"/>
    </location>
</feature>
<feature type="helix" evidence="2">
    <location>
        <begin position="8"/>
        <end position="32"/>
    </location>
</feature>
<sequence>MTAESMLANGAFIMIGLTLLGLAWGFVIIKLQGSEE</sequence>
<gene>
    <name evidence="1" type="primary">petM</name>
    <name type="ordered locus">smr0003</name>
</gene>
<name>PETM_SYNY3</name>
<proteinExistence type="evidence at protein level"/>
<accession>P74810</accession>
<evidence type="ECO:0000255" key="1">
    <source>
        <dbReference type="HAMAP-Rule" id="MF_00396"/>
    </source>
</evidence>
<evidence type="ECO:0007829" key="2">
    <source>
        <dbReference type="PDB" id="7R0W"/>
    </source>
</evidence>
<organism>
    <name type="scientific">Synechocystis sp. (strain ATCC 27184 / PCC 6803 / Kazusa)</name>
    <dbReference type="NCBI Taxonomy" id="1111708"/>
    <lineage>
        <taxon>Bacteria</taxon>
        <taxon>Bacillati</taxon>
        <taxon>Cyanobacteriota</taxon>
        <taxon>Cyanophyceae</taxon>
        <taxon>Synechococcales</taxon>
        <taxon>Merismopediaceae</taxon>
        <taxon>Synechocystis</taxon>
    </lineage>
</organism>
<dbReference type="EMBL" id="BA000022">
    <property type="protein sequence ID" value="BAA10763.1"/>
    <property type="molecule type" value="Genomic_DNA"/>
</dbReference>
<dbReference type="PIR" id="S77071">
    <property type="entry name" value="S77071"/>
</dbReference>
<dbReference type="PDB" id="7R0W">
    <property type="method" value="EM"/>
    <property type="resolution" value="2.80 A"/>
    <property type="chains" value="F/N=1-36"/>
</dbReference>
<dbReference type="PDB" id="7ZXY">
    <property type="method" value="EM"/>
    <property type="resolution" value="3.15 A"/>
    <property type="chains" value="F/N=1-36"/>
</dbReference>
<dbReference type="PDBsum" id="7R0W"/>
<dbReference type="PDBsum" id="7ZXY"/>
<dbReference type="EMDB" id="EMD-14224"/>
<dbReference type="EMDB" id="EMD-15017"/>
<dbReference type="SMR" id="P74810"/>
<dbReference type="STRING" id="1148.gene:10500267"/>
<dbReference type="PaxDb" id="1148-1673360"/>
<dbReference type="EnsemblBacteria" id="BAA10763">
    <property type="protein sequence ID" value="BAA10763"/>
    <property type="gene ID" value="BAA10763"/>
</dbReference>
<dbReference type="KEGG" id="syn:smr0003"/>
<dbReference type="InParanoid" id="P74810"/>
<dbReference type="Proteomes" id="UP000001425">
    <property type="component" value="Chromosome"/>
</dbReference>
<dbReference type="GO" id="GO:0009512">
    <property type="term" value="C:cytochrome b6f complex"/>
    <property type="evidence" value="ECO:0007669"/>
    <property type="project" value="InterPro"/>
</dbReference>
<dbReference type="GO" id="GO:0031676">
    <property type="term" value="C:plasma membrane-derived thylakoid membrane"/>
    <property type="evidence" value="ECO:0007669"/>
    <property type="project" value="UniProtKB-SubCell"/>
</dbReference>
<dbReference type="GO" id="GO:0009055">
    <property type="term" value="F:electron transfer activity"/>
    <property type="evidence" value="ECO:0007669"/>
    <property type="project" value="UniProtKB-UniRule"/>
</dbReference>
<dbReference type="GO" id="GO:0015979">
    <property type="term" value="P:photosynthesis"/>
    <property type="evidence" value="ECO:0007669"/>
    <property type="project" value="UniProtKB-KW"/>
</dbReference>
<dbReference type="HAMAP" id="MF_00396">
    <property type="entry name" value="Cytb6_f_PetM"/>
    <property type="match status" value="1"/>
</dbReference>
<dbReference type="InterPro" id="IPR012595">
    <property type="entry name" value="PetM_cyt_b6/f_cplx_su7"/>
</dbReference>
<dbReference type="Pfam" id="PF08041">
    <property type="entry name" value="PetM"/>
    <property type="match status" value="1"/>
</dbReference>
<dbReference type="SUPFAM" id="SSF103441">
    <property type="entry name" value="PetM subunit of the cytochrome b6f complex"/>
    <property type="match status" value="1"/>
</dbReference>
<protein>
    <recommendedName>
        <fullName evidence="1">Cytochrome b6-f complex subunit 7</fullName>
    </recommendedName>
    <alternativeName>
        <fullName evidence="1">Cytochrome b6-f complex subunit PetM</fullName>
    </alternativeName>
    <alternativeName>
        <fullName evidence="1">Cytochrome b6-f complex subunit VII</fullName>
    </alternativeName>
</protein>